<keyword id="KW-0963">Cytoplasm</keyword>
<keyword id="KW-0275">Fatty acid biosynthesis</keyword>
<keyword id="KW-0276">Fatty acid metabolism</keyword>
<keyword id="KW-0444">Lipid biosynthesis</keyword>
<keyword id="KW-0443">Lipid metabolism</keyword>
<keyword id="KW-0596">Phosphopantetheine</keyword>
<keyword id="KW-0597">Phosphoprotein</keyword>
<keyword id="KW-1185">Reference proteome</keyword>
<gene>
    <name evidence="1" type="primary">acpP</name>
    <name type="ordered locus">SCO0549</name>
    <name type="ORF">SCF11.29c</name>
</gene>
<organism>
    <name type="scientific">Streptomyces coelicolor (strain ATCC BAA-471 / A3(2) / M145)</name>
    <dbReference type="NCBI Taxonomy" id="100226"/>
    <lineage>
        <taxon>Bacteria</taxon>
        <taxon>Bacillati</taxon>
        <taxon>Actinomycetota</taxon>
        <taxon>Actinomycetes</taxon>
        <taxon>Kitasatosporales</taxon>
        <taxon>Streptomycetaceae</taxon>
        <taxon>Streptomyces</taxon>
        <taxon>Streptomyces albidoflavus group</taxon>
    </lineage>
</organism>
<protein>
    <recommendedName>
        <fullName evidence="1">Acyl carrier protein</fullName>
        <shortName evidence="1">ACP</shortName>
    </recommendedName>
</protein>
<sequence length="92" mass="9876">MPSTADERQLLDELRDLLAATVEDLTVEEIGPDSSLQDDLGVDSLARLELVAAIEDRWQIEVPQEQADRLTTVRQIAAHLAEAVAAPAGGTA</sequence>
<name>ACP_STRCO</name>
<evidence type="ECO:0000255" key="1">
    <source>
        <dbReference type="HAMAP-Rule" id="MF_01217"/>
    </source>
</evidence>
<evidence type="ECO:0000255" key="2">
    <source>
        <dbReference type="PROSITE-ProRule" id="PRU00258"/>
    </source>
</evidence>
<comment type="function">
    <text evidence="1">Carrier of the growing fatty acid chain in fatty acid biosynthesis.</text>
</comment>
<comment type="pathway">
    <text evidence="1">Lipid metabolism; fatty acid biosynthesis.</text>
</comment>
<comment type="subcellular location">
    <subcellularLocation>
        <location evidence="1">Cytoplasm</location>
    </subcellularLocation>
</comment>
<comment type="PTM">
    <text evidence="1">4'-phosphopantetheine is transferred from CoA to a specific serine of apo-ACP by AcpS. This modification is essential for activity because fatty acids are bound in thioester linkage to the sulfhydryl of the prosthetic group.</text>
</comment>
<comment type="similarity">
    <text evidence="1">Belongs to the acyl carrier protein (ACP) family.</text>
</comment>
<reference key="1">
    <citation type="journal article" date="2002" name="Nature">
        <title>Complete genome sequence of the model actinomycete Streptomyces coelicolor A3(2).</title>
        <authorList>
            <person name="Bentley S.D."/>
            <person name="Chater K.F."/>
            <person name="Cerdeno-Tarraga A.-M."/>
            <person name="Challis G.L."/>
            <person name="Thomson N.R."/>
            <person name="James K.D."/>
            <person name="Harris D.E."/>
            <person name="Quail M.A."/>
            <person name="Kieser H."/>
            <person name="Harper D."/>
            <person name="Bateman A."/>
            <person name="Brown S."/>
            <person name="Chandra G."/>
            <person name="Chen C.W."/>
            <person name="Collins M."/>
            <person name="Cronin A."/>
            <person name="Fraser A."/>
            <person name="Goble A."/>
            <person name="Hidalgo J."/>
            <person name="Hornsby T."/>
            <person name="Howarth S."/>
            <person name="Huang C.-H."/>
            <person name="Kieser T."/>
            <person name="Larke L."/>
            <person name="Murphy L.D."/>
            <person name="Oliver K."/>
            <person name="O'Neil S."/>
            <person name="Rabbinowitsch E."/>
            <person name="Rajandream M.A."/>
            <person name="Rutherford K.M."/>
            <person name="Rutter S."/>
            <person name="Seeger K."/>
            <person name="Saunders D."/>
            <person name="Sharp S."/>
            <person name="Squares R."/>
            <person name="Squares S."/>
            <person name="Taylor K."/>
            <person name="Warren T."/>
            <person name="Wietzorrek A."/>
            <person name="Woodward J.R."/>
            <person name="Barrell B.G."/>
            <person name="Parkhill J."/>
            <person name="Hopwood D.A."/>
        </authorList>
    </citation>
    <scope>NUCLEOTIDE SEQUENCE [LARGE SCALE GENOMIC DNA]</scope>
    <source>
        <strain>ATCC BAA-471 / A3(2) / M145</strain>
    </source>
</reference>
<feature type="chain" id="PRO_0000180198" description="Acyl carrier protein">
    <location>
        <begin position="1"/>
        <end position="92"/>
    </location>
</feature>
<feature type="domain" description="Carrier" evidence="2">
    <location>
        <begin position="1"/>
        <end position="84"/>
    </location>
</feature>
<feature type="modified residue" description="O-(pantetheine 4'-phosphoryl)serine" evidence="2">
    <location>
        <position position="44"/>
    </location>
</feature>
<proteinExistence type="inferred from homology"/>
<dbReference type="EMBL" id="AL939105">
    <property type="protein sequence ID" value="CAB59606.1"/>
    <property type="molecule type" value="Genomic_DNA"/>
</dbReference>
<dbReference type="RefSeq" id="NP_624863.1">
    <property type="nucleotide sequence ID" value="NC_003888.3"/>
</dbReference>
<dbReference type="RefSeq" id="WP_003978314.1">
    <property type="nucleotide sequence ID" value="NZ_VNID01000015.1"/>
</dbReference>
<dbReference type="SMR" id="Q9RK61"/>
<dbReference type="STRING" id="100226.gene:17758132"/>
<dbReference type="PaxDb" id="100226-SCO0549"/>
<dbReference type="KEGG" id="sco:SCO0549"/>
<dbReference type="PATRIC" id="fig|100226.15.peg.529"/>
<dbReference type="eggNOG" id="COG0236">
    <property type="taxonomic scope" value="Bacteria"/>
</dbReference>
<dbReference type="HOGENOM" id="CLU_108696_2_0_11"/>
<dbReference type="InParanoid" id="Q9RK61"/>
<dbReference type="OrthoDB" id="4294436at2"/>
<dbReference type="PhylomeDB" id="Q9RK61"/>
<dbReference type="UniPathway" id="UPA00094"/>
<dbReference type="Proteomes" id="UP000001973">
    <property type="component" value="Chromosome"/>
</dbReference>
<dbReference type="GO" id="GO:0005829">
    <property type="term" value="C:cytosol"/>
    <property type="evidence" value="ECO:0000318"/>
    <property type="project" value="GO_Central"/>
</dbReference>
<dbReference type="GO" id="GO:0016020">
    <property type="term" value="C:membrane"/>
    <property type="evidence" value="ECO:0007669"/>
    <property type="project" value="GOC"/>
</dbReference>
<dbReference type="GO" id="GO:0000035">
    <property type="term" value="F:acyl binding"/>
    <property type="evidence" value="ECO:0000318"/>
    <property type="project" value="GO_Central"/>
</dbReference>
<dbReference type="GO" id="GO:0000036">
    <property type="term" value="F:acyl carrier activity"/>
    <property type="evidence" value="ECO:0000318"/>
    <property type="project" value="GO_Central"/>
</dbReference>
<dbReference type="GO" id="GO:0009245">
    <property type="term" value="P:lipid A biosynthetic process"/>
    <property type="evidence" value="ECO:0000318"/>
    <property type="project" value="GO_Central"/>
</dbReference>
<dbReference type="Gene3D" id="1.10.1200.10">
    <property type="entry name" value="ACP-like"/>
    <property type="match status" value="1"/>
</dbReference>
<dbReference type="HAMAP" id="MF_01217">
    <property type="entry name" value="Acyl_carrier"/>
    <property type="match status" value="1"/>
</dbReference>
<dbReference type="InterPro" id="IPR003231">
    <property type="entry name" value="ACP"/>
</dbReference>
<dbReference type="InterPro" id="IPR036736">
    <property type="entry name" value="ACP-like_sf"/>
</dbReference>
<dbReference type="InterPro" id="IPR009081">
    <property type="entry name" value="PP-bd_ACP"/>
</dbReference>
<dbReference type="PANTHER" id="PTHR20863">
    <property type="entry name" value="ACYL CARRIER PROTEIN"/>
    <property type="match status" value="1"/>
</dbReference>
<dbReference type="PANTHER" id="PTHR20863:SF76">
    <property type="entry name" value="CARRIER DOMAIN-CONTAINING PROTEIN"/>
    <property type="match status" value="1"/>
</dbReference>
<dbReference type="Pfam" id="PF00550">
    <property type="entry name" value="PP-binding"/>
    <property type="match status" value="1"/>
</dbReference>
<dbReference type="SUPFAM" id="SSF47336">
    <property type="entry name" value="ACP-like"/>
    <property type="match status" value="1"/>
</dbReference>
<dbReference type="PROSITE" id="PS50075">
    <property type="entry name" value="CARRIER"/>
    <property type="match status" value="1"/>
</dbReference>
<accession>Q9RK61</accession>